<name>AZOR4_BURL3</name>
<feature type="chain" id="PRO_0000245904" description="FMN-dependent NADH:quinone oxidoreductase 4">
    <location>
        <begin position="1"/>
        <end position="199"/>
    </location>
</feature>
<feature type="binding site" evidence="1">
    <location>
        <position position="10"/>
    </location>
    <ligand>
        <name>FMN</name>
        <dbReference type="ChEBI" id="CHEBI:58210"/>
    </ligand>
</feature>
<feature type="binding site" evidence="1">
    <location>
        <begin position="95"/>
        <end position="98"/>
    </location>
    <ligand>
        <name>FMN</name>
        <dbReference type="ChEBI" id="CHEBI:58210"/>
    </ligand>
</feature>
<feature type="binding site" evidence="1">
    <location>
        <begin position="139"/>
        <end position="142"/>
    </location>
    <ligand>
        <name>FMN</name>
        <dbReference type="ChEBI" id="CHEBI:58210"/>
    </ligand>
</feature>
<gene>
    <name evidence="1" type="primary">azoR4</name>
    <name type="ordered locus">Bcep18194_B2923</name>
</gene>
<protein>
    <recommendedName>
        <fullName evidence="1">FMN-dependent NADH:quinone oxidoreductase 4</fullName>
        <ecNumber evidence="1">1.6.5.-</ecNumber>
    </recommendedName>
    <alternativeName>
        <fullName evidence="1">Azo-dye reductase 4</fullName>
    </alternativeName>
    <alternativeName>
        <fullName evidence="1">FMN-dependent NADH-azo compound oxidoreductase 4</fullName>
    </alternativeName>
    <alternativeName>
        <fullName evidence="1">FMN-dependent NADH-azoreductase 4</fullName>
        <ecNumber evidence="1">1.7.1.17</ecNumber>
    </alternativeName>
</protein>
<reference key="1">
    <citation type="submission" date="2005-10" db="EMBL/GenBank/DDBJ databases">
        <title>Complete sequence of chromosome 2 of Burkholderia sp. 383.</title>
        <authorList>
            <consortium name="US DOE Joint Genome Institute"/>
            <person name="Copeland A."/>
            <person name="Lucas S."/>
            <person name="Lapidus A."/>
            <person name="Barry K."/>
            <person name="Detter J.C."/>
            <person name="Glavina T."/>
            <person name="Hammon N."/>
            <person name="Israni S."/>
            <person name="Pitluck S."/>
            <person name="Chain P."/>
            <person name="Malfatti S."/>
            <person name="Shin M."/>
            <person name="Vergez L."/>
            <person name="Schmutz J."/>
            <person name="Larimer F."/>
            <person name="Land M."/>
            <person name="Kyrpides N."/>
            <person name="Lykidis A."/>
            <person name="Richardson P."/>
        </authorList>
    </citation>
    <scope>NUCLEOTIDE SEQUENCE [LARGE SCALE GENOMIC DNA]</scope>
    <source>
        <strain>ATCC 17760 / DSM 23089 / LMG 22485 / NCIMB 9086 / R18194 / 383</strain>
    </source>
</reference>
<organism>
    <name type="scientific">Burkholderia lata (strain ATCC 17760 / DSM 23089 / LMG 22485 / NCIMB 9086 / R18194 / 383)</name>
    <dbReference type="NCBI Taxonomy" id="482957"/>
    <lineage>
        <taxon>Bacteria</taxon>
        <taxon>Pseudomonadati</taxon>
        <taxon>Pseudomonadota</taxon>
        <taxon>Betaproteobacteria</taxon>
        <taxon>Burkholderiales</taxon>
        <taxon>Burkholderiaceae</taxon>
        <taxon>Burkholderia</taxon>
        <taxon>Burkholderia cepacia complex</taxon>
    </lineage>
</organism>
<comment type="function">
    <text evidence="1">Quinone reductase that provides resistance to thiol-specific stress caused by electrophilic quinones.</text>
</comment>
<comment type="function">
    <text evidence="1">Also exhibits azoreductase activity. Catalyzes the reductive cleavage of the azo bond in aromatic azo compounds to the corresponding amines.</text>
</comment>
<comment type="catalytic activity">
    <reaction evidence="1">
        <text>2 a quinone + NADH + H(+) = 2 a 1,4-benzosemiquinone + NAD(+)</text>
        <dbReference type="Rhea" id="RHEA:65952"/>
        <dbReference type="ChEBI" id="CHEBI:15378"/>
        <dbReference type="ChEBI" id="CHEBI:57540"/>
        <dbReference type="ChEBI" id="CHEBI:57945"/>
        <dbReference type="ChEBI" id="CHEBI:132124"/>
        <dbReference type="ChEBI" id="CHEBI:134225"/>
    </reaction>
</comment>
<comment type="catalytic activity">
    <reaction evidence="1">
        <text>N,N-dimethyl-1,4-phenylenediamine + anthranilate + 2 NAD(+) = 2-(4-dimethylaminophenyl)diazenylbenzoate + 2 NADH + 2 H(+)</text>
        <dbReference type="Rhea" id="RHEA:55872"/>
        <dbReference type="ChEBI" id="CHEBI:15378"/>
        <dbReference type="ChEBI" id="CHEBI:15783"/>
        <dbReference type="ChEBI" id="CHEBI:16567"/>
        <dbReference type="ChEBI" id="CHEBI:57540"/>
        <dbReference type="ChEBI" id="CHEBI:57945"/>
        <dbReference type="ChEBI" id="CHEBI:71579"/>
        <dbReference type="EC" id="1.7.1.17"/>
    </reaction>
</comment>
<comment type="cofactor">
    <cofactor evidence="1">
        <name>FMN</name>
        <dbReference type="ChEBI" id="CHEBI:58210"/>
    </cofactor>
    <text evidence="1">Binds 1 FMN per subunit.</text>
</comment>
<comment type="subunit">
    <text evidence="1">Homodimer.</text>
</comment>
<comment type="similarity">
    <text evidence="1">Belongs to the azoreductase type 1 family.</text>
</comment>
<proteinExistence type="inferred from homology"/>
<dbReference type="EC" id="1.6.5.-" evidence="1"/>
<dbReference type="EC" id="1.7.1.17" evidence="1"/>
<dbReference type="EMBL" id="CP000152">
    <property type="protein sequence ID" value="ABB13034.1"/>
    <property type="molecule type" value="Genomic_DNA"/>
</dbReference>
<dbReference type="RefSeq" id="WP_011356513.1">
    <property type="nucleotide sequence ID" value="NC_007511.1"/>
</dbReference>
<dbReference type="SMR" id="Q390T2"/>
<dbReference type="GeneID" id="45099227"/>
<dbReference type="KEGG" id="bur:Bcep18194_B2923"/>
<dbReference type="PATRIC" id="fig|482957.22.peg.6743"/>
<dbReference type="HOGENOM" id="CLU_088964_0_0_4"/>
<dbReference type="Proteomes" id="UP000002705">
    <property type="component" value="Chromosome 2"/>
</dbReference>
<dbReference type="GO" id="GO:0009055">
    <property type="term" value="F:electron transfer activity"/>
    <property type="evidence" value="ECO:0007669"/>
    <property type="project" value="UniProtKB-UniRule"/>
</dbReference>
<dbReference type="GO" id="GO:0010181">
    <property type="term" value="F:FMN binding"/>
    <property type="evidence" value="ECO:0007669"/>
    <property type="project" value="UniProtKB-UniRule"/>
</dbReference>
<dbReference type="GO" id="GO:0016652">
    <property type="term" value="F:oxidoreductase activity, acting on NAD(P)H as acceptor"/>
    <property type="evidence" value="ECO:0007669"/>
    <property type="project" value="UniProtKB-UniRule"/>
</dbReference>
<dbReference type="GO" id="GO:0016655">
    <property type="term" value="F:oxidoreductase activity, acting on NAD(P)H, quinone or similar compound as acceptor"/>
    <property type="evidence" value="ECO:0007669"/>
    <property type="project" value="InterPro"/>
</dbReference>
<dbReference type="Gene3D" id="3.40.50.360">
    <property type="match status" value="1"/>
</dbReference>
<dbReference type="HAMAP" id="MF_01216">
    <property type="entry name" value="Azoreductase_type1"/>
    <property type="match status" value="1"/>
</dbReference>
<dbReference type="InterPro" id="IPR003680">
    <property type="entry name" value="Flavodoxin_fold"/>
</dbReference>
<dbReference type="InterPro" id="IPR029039">
    <property type="entry name" value="Flavoprotein-like_sf"/>
</dbReference>
<dbReference type="InterPro" id="IPR050104">
    <property type="entry name" value="FMN-dep_NADH:Q_OxRdtase_AzoR1"/>
</dbReference>
<dbReference type="InterPro" id="IPR023048">
    <property type="entry name" value="NADH:quinone_OxRdtase_FMN_depd"/>
</dbReference>
<dbReference type="PANTHER" id="PTHR43741">
    <property type="entry name" value="FMN-DEPENDENT NADH-AZOREDUCTASE 1"/>
    <property type="match status" value="1"/>
</dbReference>
<dbReference type="PANTHER" id="PTHR43741:SF2">
    <property type="entry name" value="FMN-DEPENDENT NADH:QUINONE OXIDOREDUCTASE"/>
    <property type="match status" value="1"/>
</dbReference>
<dbReference type="Pfam" id="PF02525">
    <property type="entry name" value="Flavodoxin_2"/>
    <property type="match status" value="1"/>
</dbReference>
<dbReference type="SUPFAM" id="SSF52218">
    <property type="entry name" value="Flavoproteins"/>
    <property type="match status" value="1"/>
</dbReference>
<sequence>MARILVLKSSINGSQSQTSTLIDTFLAERQANGHADDVIVRNLVDADLPMLDSELFHALRGAANPSERAQRAIVLSDELIAELKGSDLLLIGAPMYNLNVPTQLKNWFDLVARARVTFRYTETYPVGLVEGISAIVFSSRGGVHVGQDTDAVTPYLRAVLGLMGIVDVEFVYAEGLDMKPHGFDAGLADARRQMDALHA</sequence>
<accession>Q390T2</accession>
<keyword id="KW-0285">Flavoprotein</keyword>
<keyword id="KW-0288">FMN</keyword>
<keyword id="KW-0520">NAD</keyword>
<keyword id="KW-0560">Oxidoreductase</keyword>
<evidence type="ECO:0000255" key="1">
    <source>
        <dbReference type="HAMAP-Rule" id="MF_01216"/>
    </source>
</evidence>